<comment type="function">
    <text evidence="1">The proteasome is a multicatalytic proteinase complex which is characterized by its ability to cleave peptides with Arg, Phe, Tyr, Leu, and Glu adjacent to the leaving group at neutral or slightly basic pH. The proteasome has an ATP-dependent proteolytic activity (By similarity).</text>
</comment>
<comment type="catalytic activity">
    <reaction>
        <text>Cleavage of peptide bonds with very broad specificity.</text>
        <dbReference type="EC" id="3.4.25.1"/>
    </reaction>
</comment>
<comment type="subunit">
    <text evidence="1">The 26S proteasome consists of a 20S proteasome core and two 19S regulatory subunits. The 20S proteasome core is composed of 28 subunits that are arranged in four stacked rings, resulting in a barrel-shaped structure. The two end rings are each formed by seven alpha subunits, and the two central rings are each formed by seven beta subunits. The catalytic chamber with the active sites is on the inside of the barrel (By similarity).</text>
</comment>
<comment type="subcellular location">
    <subcellularLocation>
        <location evidence="2">Cytoplasm</location>
    </subcellularLocation>
    <subcellularLocation>
        <location evidence="1">Nucleus</location>
    </subcellularLocation>
</comment>
<comment type="similarity">
    <text evidence="2">Belongs to the peptidase T1B family.</text>
</comment>
<dbReference type="EC" id="3.4.25.1"/>
<dbReference type="EMBL" id="AAFI02000056">
    <property type="protein sequence ID" value="EAL65606.1"/>
    <property type="molecule type" value="Genomic_DNA"/>
</dbReference>
<dbReference type="RefSeq" id="XP_638961.1">
    <property type="nucleotide sequence ID" value="XM_633869.1"/>
</dbReference>
<dbReference type="SMR" id="Q54QR2"/>
<dbReference type="FunCoup" id="Q54QR2">
    <property type="interactions" value="1026"/>
</dbReference>
<dbReference type="STRING" id="44689.Q54QR2"/>
<dbReference type="MEROPS" id="T01.A02"/>
<dbReference type="PaxDb" id="44689-DDB0232933"/>
<dbReference type="EnsemblProtists" id="EAL65606">
    <property type="protein sequence ID" value="EAL65606"/>
    <property type="gene ID" value="DDB_G0283679"/>
</dbReference>
<dbReference type="GeneID" id="8624207"/>
<dbReference type="KEGG" id="ddi:DDB_G0283679"/>
<dbReference type="dictyBase" id="DDB_G0283679">
    <property type="gene designation" value="psmB7"/>
</dbReference>
<dbReference type="VEuPathDB" id="AmoebaDB:DDB_G0283679"/>
<dbReference type="eggNOG" id="KOG0173">
    <property type="taxonomic scope" value="Eukaryota"/>
</dbReference>
<dbReference type="HOGENOM" id="CLU_035750_3_0_1"/>
<dbReference type="InParanoid" id="Q54QR2"/>
<dbReference type="OMA" id="GTQVDLC"/>
<dbReference type="PhylomeDB" id="Q54QR2"/>
<dbReference type="Reactome" id="R-DDI-1236978">
    <property type="pathway name" value="Cross-presentation of soluble exogenous antigens (endosomes)"/>
</dbReference>
<dbReference type="Reactome" id="R-DDI-174084">
    <property type="pathway name" value="Autodegradation of Cdh1 by Cdh1:APC/C"/>
</dbReference>
<dbReference type="Reactome" id="R-DDI-174154">
    <property type="pathway name" value="APC/C:Cdc20 mediated degradation of Securin"/>
</dbReference>
<dbReference type="Reactome" id="R-DDI-174178">
    <property type="pathway name" value="APC/C:Cdh1 mediated degradation of Cdc20 and other APC/C:Cdh1 targeted proteins in late mitosis/early G1"/>
</dbReference>
<dbReference type="Reactome" id="R-DDI-2467813">
    <property type="pathway name" value="Separation of Sister Chromatids"/>
</dbReference>
<dbReference type="Reactome" id="R-DDI-349425">
    <property type="pathway name" value="Autodegradation of the E3 ubiquitin ligase COP1"/>
</dbReference>
<dbReference type="Reactome" id="R-DDI-382556">
    <property type="pathway name" value="ABC-family proteins mediated transport"/>
</dbReference>
<dbReference type="Reactome" id="R-DDI-450408">
    <property type="pathway name" value="AUF1 (hnRNP D0) binds and destabilizes mRNA"/>
</dbReference>
<dbReference type="Reactome" id="R-DDI-4641258">
    <property type="pathway name" value="Degradation of DVL"/>
</dbReference>
<dbReference type="Reactome" id="R-DDI-5632684">
    <property type="pathway name" value="Hedgehog 'on' state"/>
</dbReference>
<dbReference type="Reactome" id="R-DDI-5658442">
    <property type="pathway name" value="Regulation of RAS by GAPs"/>
</dbReference>
<dbReference type="Reactome" id="R-DDI-5687128">
    <property type="pathway name" value="MAPK6/MAPK4 signaling"/>
</dbReference>
<dbReference type="Reactome" id="R-DDI-5689603">
    <property type="pathway name" value="UCH proteinases"/>
</dbReference>
<dbReference type="Reactome" id="R-DDI-5689880">
    <property type="pathway name" value="Ub-specific processing proteases"/>
</dbReference>
<dbReference type="Reactome" id="R-DDI-6798695">
    <property type="pathway name" value="Neutrophil degranulation"/>
</dbReference>
<dbReference type="Reactome" id="R-DDI-68949">
    <property type="pathway name" value="Orc1 removal from chromatin"/>
</dbReference>
<dbReference type="Reactome" id="R-DDI-69017">
    <property type="pathway name" value="CDK-mediated phosphorylation and removal of Cdc6"/>
</dbReference>
<dbReference type="Reactome" id="R-DDI-69601">
    <property type="pathway name" value="Ubiquitin Mediated Degradation of Phosphorylated Cdc25A"/>
</dbReference>
<dbReference type="Reactome" id="R-DDI-8854050">
    <property type="pathway name" value="FBXL7 down-regulates AURKA during mitotic entry and in early mitosis"/>
</dbReference>
<dbReference type="Reactome" id="R-DDI-8948751">
    <property type="pathway name" value="Regulation of PTEN stability and activity"/>
</dbReference>
<dbReference type="Reactome" id="R-DDI-8951664">
    <property type="pathway name" value="Neddylation"/>
</dbReference>
<dbReference type="Reactome" id="R-DDI-9755511">
    <property type="pathway name" value="KEAP1-NFE2L2 pathway"/>
</dbReference>
<dbReference type="Reactome" id="R-DDI-983168">
    <property type="pathway name" value="Antigen processing: Ubiquitination &amp; Proteasome degradation"/>
</dbReference>
<dbReference type="Reactome" id="R-DDI-9907900">
    <property type="pathway name" value="Proteasome assembly"/>
</dbReference>
<dbReference type="PRO" id="PR:Q54QR2"/>
<dbReference type="Proteomes" id="UP000002195">
    <property type="component" value="Chromosome 4"/>
</dbReference>
<dbReference type="GO" id="GO:0005737">
    <property type="term" value="C:cytoplasm"/>
    <property type="evidence" value="ECO:0000353"/>
    <property type="project" value="dictyBase"/>
</dbReference>
<dbReference type="GO" id="GO:0005829">
    <property type="term" value="C:cytosol"/>
    <property type="evidence" value="ECO:0000318"/>
    <property type="project" value="GO_Central"/>
</dbReference>
<dbReference type="GO" id="GO:0005634">
    <property type="term" value="C:nucleus"/>
    <property type="evidence" value="ECO:0000353"/>
    <property type="project" value="dictyBase"/>
</dbReference>
<dbReference type="GO" id="GO:0019774">
    <property type="term" value="C:proteasome core complex, beta-subunit complex"/>
    <property type="evidence" value="ECO:0000314"/>
    <property type="project" value="dictyBase"/>
</dbReference>
<dbReference type="GO" id="GO:0004175">
    <property type="term" value="F:endopeptidase activity"/>
    <property type="evidence" value="ECO:0000314"/>
    <property type="project" value="dictyBase"/>
</dbReference>
<dbReference type="GO" id="GO:0004298">
    <property type="term" value="F:threonine-type endopeptidase activity"/>
    <property type="evidence" value="ECO:0007669"/>
    <property type="project" value="UniProtKB-KW"/>
</dbReference>
<dbReference type="GO" id="GO:0010498">
    <property type="term" value="P:proteasomal protein catabolic process"/>
    <property type="evidence" value="ECO:0000314"/>
    <property type="project" value="dictyBase"/>
</dbReference>
<dbReference type="GO" id="GO:0043161">
    <property type="term" value="P:proteasome-mediated ubiquitin-dependent protein catabolic process"/>
    <property type="evidence" value="ECO:0000318"/>
    <property type="project" value="GO_Central"/>
</dbReference>
<dbReference type="CDD" id="cd03763">
    <property type="entry name" value="proteasome_beta_type_7"/>
    <property type="match status" value="1"/>
</dbReference>
<dbReference type="FunFam" id="3.60.20.10:FF:000005">
    <property type="entry name" value="Proteasome subunit beta type-2"/>
    <property type="match status" value="1"/>
</dbReference>
<dbReference type="Gene3D" id="3.60.20.10">
    <property type="entry name" value="Glutamine Phosphoribosylpyrophosphate, subunit 1, domain 1"/>
    <property type="match status" value="1"/>
</dbReference>
<dbReference type="InterPro" id="IPR029055">
    <property type="entry name" value="Ntn_hydrolases_N"/>
</dbReference>
<dbReference type="InterPro" id="IPR000243">
    <property type="entry name" value="Pept_T1A_subB"/>
</dbReference>
<dbReference type="InterPro" id="IPR024689">
    <property type="entry name" value="Proteasome_bsu_C"/>
</dbReference>
<dbReference type="InterPro" id="IPR016050">
    <property type="entry name" value="Proteasome_bsu_CS"/>
</dbReference>
<dbReference type="InterPro" id="IPR001353">
    <property type="entry name" value="Proteasome_sua/b"/>
</dbReference>
<dbReference type="InterPro" id="IPR023333">
    <property type="entry name" value="Proteasome_suB-type"/>
</dbReference>
<dbReference type="PANTHER" id="PTHR32194">
    <property type="entry name" value="METALLOPROTEASE TLDD"/>
    <property type="match status" value="1"/>
</dbReference>
<dbReference type="PANTHER" id="PTHR32194:SF4">
    <property type="entry name" value="PROTEASOME SUBUNIT BETA TYPE-7"/>
    <property type="match status" value="1"/>
</dbReference>
<dbReference type="Pfam" id="PF12465">
    <property type="entry name" value="Pr_beta_C"/>
    <property type="match status" value="1"/>
</dbReference>
<dbReference type="Pfam" id="PF00227">
    <property type="entry name" value="Proteasome"/>
    <property type="match status" value="1"/>
</dbReference>
<dbReference type="PRINTS" id="PR00141">
    <property type="entry name" value="PROTEASOME"/>
</dbReference>
<dbReference type="SUPFAM" id="SSF56235">
    <property type="entry name" value="N-terminal nucleophile aminohydrolases (Ntn hydrolases)"/>
    <property type="match status" value="1"/>
</dbReference>
<dbReference type="PROSITE" id="PS00854">
    <property type="entry name" value="PROTEASOME_BETA_1"/>
    <property type="match status" value="1"/>
</dbReference>
<dbReference type="PROSITE" id="PS51476">
    <property type="entry name" value="PROTEASOME_BETA_2"/>
    <property type="match status" value="1"/>
</dbReference>
<name>PSB7_DICDI</name>
<keyword id="KW-0963">Cytoplasm</keyword>
<keyword id="KW-0378">Hydrolase</keyword>
<keyword id="KW-0539">Nucleus</keyword>
<keyword id="KW-0645">Protease</keyword>
<keyword id="KW-0647">Proteasome</keyword>
<keyword id="KW-1185">Reference proteome</keyword>
<keyword id="KW-0888">Threonine protease</keyword>
<accession>Q54QR2</accession>
<organism>
    <name type="scientific">Dictyostelium discoideum</name>
    <name type="common">Social amoeba</name>
    <dbReference type="NCBI Taxonomy" id="44689"/>
    <lineage>
        <taxon>Eukaryota</taxon>
        <taxon>Amoebozoa</taxon>
        <taxon>Evosea</taxon>
        <taxon>Eumycetozoa</taxon>
        <taxon>Dictyostelia</taxon>
        <taxon>Dictyosteliales</taxon>
        <taxon>Dictyosteliaceae</taxon>
        <taxon>Dictyostelium</taxon>
    </lineage>
</organism>
<reference key="1">
    <citation type="journal article" date="2005" name="Nature">
        <title>The genome of the social amoeba Dictyostelium discoideum.</title>
        <authorList>
            <person name="Eichinger L."/>
            <person name="Pachebat J.A."/>
            <person name="Gloeckner G."/>
            <person name="Rajandream M.A."/>
            <person name="Sucgang R."/>
            <person name="Berriman M."/>
            <person name="Song J."/>
            <person name="Olsen R."/>
            <person name="Szafranski K."/>
            <person name="Xu Q."/>
            <person name="Tunggal B."/>
            <person name="Kummerfeld S."/>
            <person name="Madera M."/>
            <person name="Konfortov B.A."/>
            <person name="Rivero F."/>
            <person name="Bankier A.T."/>
            <person name="Lehmann R."/>
            <person name="Hamlin N."/>
            <person name="Davies R."/>
            <person name="Gaudet P."/>
            <person name="Fey P."/>
            <person name="Pilcher K."/>
            <person name="Chen G."/>
            <person name="Saunders D."/>
            <person name="Sodergren E.J."/>
            <person name="Davis P."/>
            <person name="Kerhornou A."/>
            <person name="Nie X."/>
            <person name="Hall N."/>
            <person name="Anjard C."/>
            <person name="Hemphill L."/>
            <person name="Bason N."/>
            <person name="Farbrother P."/>
            <person name="Desany B."/>
            <person name="Just E."/>
            <person name="Morio T."/>
            <person name="Rost R."/>
            <person name="Churcher C.M."/>
            <person name="Cooper J."/>
            <person name="Haydock S."/>
            <person name="van Driessche N."/>
            <person name="Cronin A."/>
            <person name="Goodhead I."/>
            <person name="Muzny D.M."/>
            <person name="Mourier T."/>
            <person name="Pain A."/>
            <person name="Lu M."/>
            <person name="Harper D."/>
            <person name="Lindsay R."/>
            <person name="Hauser H."/>
            <person name="James K.D."/>
            <person name="Quiles M."/>
            <person name="Madan Babu M."/>
            <person name="Saito T."/>
            <person name="Buchrieser C."/>
            <person name="Wardroper A."/>
            <person name="Felder M."/>
            <person name="Thangavelu M."/>
            <person name="Johnson D."/>
            <person name="Knights A."/>
            <person name="Loulseged H."/>
            <person name="Mungall K.L."/>
            <person name="Oliver K."/>
            <person name="Price C."/>
            <person name="Quail M.A."/>
            <person name="Urushihara H."/>
            <person name="Hernandez J."/>
            <person name="Rabbinowitsch E."/>
            <person name="Steffen D."/>
            <person name="Sanders M."/>
            <person name="Ma J."/>
            <person name="Kohara Y."/>
            <person name="Sharp S."/>
            <person name="Simmonds M.N."/>
            <person name="Spiegler S."/>
            <person name="Tivey A."/>
            <person name="Sugano S."/>
            <person name="White B."/>
            <person name="Walker D."/>
            <person name="Woodward J.R."/>
            <person name="Winckler T."/>
            <person name="Tanaka Y."/>
            <person name="Shaulsky G."/>
            <person name="Schleicher M."/>
            <person name="Weinstock G.M."/>
            <person name="Rosenthal A."/>
            <person name="Cox E.C."/>
            <person name="Chisholm R.L."/>
            <person name="Gibbs R.A."/>
            <person name="Loomis W.F."/>
            <person name="Platzer M."/>
            <person name="Kay R.R."/>
            <person name="Williams J.G."/>
            <person name="Dear P.H."/>
            <person name="Noegel A.A."/>
            <person name="Barrell B.G."/>
            <person name="Kuspa A."/>
        </authorList>
    </citation>
    <scope>NUCLEOTIDE SEQUENCE [LARGE SCALE GENOMIC DNA]</scope>
    <source>
        <strain>AX4</strain>
    </source>
</reference>
<feature type="propeptide" id="PRO_0000328484" description="Removed in mature form" evidence="1">
    <location>
        <begin position="1"/>
        <end position="34"/>
    </location>
</feature>
<feature type="chain" id="PRO_0000328483" description="Proteasome subunit beta type-7">
    <location>
        <begin position="35"/>
        <end position="266"/>
    </location>
</feature>
<feature type="active site" description="Nucleophile" evidence="3">
    <location>
        <position position="35"/>
    </location>
</feature>
<protein>
    <recommendedName>
        <fullName>Proteasome subunit beta type-7</fullName>
        <ecNumber>3.4.25.1</ecNumber>
    </recommendedName>
</protein>
<gene>
    <name type="primary">psmB7</name>
    <name type="ORF">DDB_G0283679</name>
</gene>
<sequence>MENLNRGGFDFDLCNRNNVLEKTGLRMKGFMKTGTTIVGVVYKGGVVLGADTRATEGPIVADKNCEKIHYIADNIYCCGAGTAADTESATALISSKLKLHKLSTGKQTRVITALTMLKQMLFKYQGHISAALILGGIDINGPSLHTIYPHGSTDQLPYVTMGSGSLAAMAVFEAKYKNDMTKEEAIALVAEAISSGIFNDLGSGSNVDVTVIEPSGVTVLRNYQTPNERKFRNNPYIFKQGTTPVLKQDIAPLSTKVVIEDIMMGQ</sequence>
<proteinExistence type="inferred from homology"/>
<evidence type="ECO:0000250" key="1"/>
<evidence type="ECO:0000255" key="2">
    <source>
        <dbReference type="PROSITE-ProRule" id="PRU00809"/>
    </source>
</evidence>
<evidence type="ECO:0000305" key="3"/>